<gene>
    <name evidence="1" type="primary">grcA</name>
    <name type="ordered locus">SARI_00279</name>
</gene>
<protein>
    <recommendedName>
        <fullName evidence="1">Autonomous glycyl radical cofactor</fullName>
    </recommendedName>
</protein>
<reference key="1">
    <citation type="submission" date="2007-11" db="EMBL/GenBank/DDBJ databases">
        <authorList>
            <consortium name="The Salmonella enterica serovar Arizonae Genome Sequencing Project"/>
            <person name="McClelland M."/>
            <person name="Sanderson E.K."/>
            <person name="Porwollik S."/>
            <person name="Spieth J."/>
            <person name="Clifton W.S."/>
            <person name="Fulton R."/>
            <person name="Chunyan W."/>
            <person name="Wollam A."/>
            <person name="Shah N."/>
            <person name="Pepin K."/>
            <person name="Bhonagiri V."/>
            <person name="Nash W."/>
            <person name="Johnson M."/>
            <person name="Thiruvilangam P."/>
            <person name="Wilson R."/>
        </authorList>
    </citation>
    <scope>NUCLEOTIDE SEQUENCE [LARGE SCALE GENOMIC DNA]</scope>
    <source>
        <strain>ATCC BAA-731 / CDC346-86 / RSK2980</strain>
    </source>
</reference>
<sequence length="127" mass="14344">MITGIQITKAANDDLLNSFWLLDSEKGEARCIVAKSGFAEDEVVAVSKLGEIEYREIPMEVKPEVRVEGGQHLNVNVLRRETLEDAVKHPEKYPQLTIRVSGYAVRFNSLTPEQQRDVIARTFTESL</sequence>
<organism>
    <name type="scientific">Salmonella arizonae (strain ATCC BAA-731 / CDC346-86 / RSK2980)</name>
    <dbReference type="NCBI Taxonomy" id="41514"/>
    <lineage>
        <taxon>Bacteria</taxon>
        <taxon>Pseudomonadati</taxon>
        <taxon>Pseudomonadota</taxon>
        <taxon>Gammaproteobacteria</taxon>
        <taxon>Enterobacterales</taxon>
        <taxon>Enterobacteriaceae</taxon>
        <taxon>Salmonella</taxon>
    </lineage>
</organism>
<name>GRCA_SALAR</name>
<feature type="chain" id="PRO_1000083730" description="Autonomous glycyl radical cofactor">
    <location>
        <begin position="1"/>
        <end position="127"/>
    </location>
</feature>
<feature type="domain" description="Glycine radical" evidence="1">
    <location>
        <begin position="5"/>
        <end position="127"/>
    </location>
</feature>
<feature type="modified residue" description="Glycine radical" evidence="1">
    <location>
        <position position="102"/>
    </location>
</feature>
<dbReference type="EMBL" id="CP000880">
    <property type="protein sequence ID" value="ABX20221.1"/>
    <property type="molecule type" value="Genomic_DNA"/>
</dbReference>
<dbReference type="SMR" id="A9MGW0"/>
<dbReference type="STRING" id="41514.SARI_00279"/>
<dbReference type="KEGG" id="ses:SARI_00279"/>
<dbReference type="HOGENOM" id="CLU_133780_0_0_6"/>
<dbReference type="Proteomes" id="UP000002084">
    <property type="component" value="Chromosome"/>
</dbReference>
<dbReference type="GO" id="GO:0005829">
    <property type="term" value="C:cytosol"/>
    <property type="evidence" value="ECO:0007669"/>
    <property type="project" value="TreeGrafter"/>
</dbReference>
<dbReference type="GO" id="GO:0008861">
    <property type="term" value="F:formate C-acetyltransferase activity"/>
    <property type="evidence" value="ECO:0007669"/>
    <property type="project" value="TreeGrafter"/>
</dbReference>
<dbReference type="FunFam" id="3.20.70.20:FF:000002">
    <property type="entry name" value="Autonomous glycyl radical cofactor"/>
    <property type="match status" value="1"/>
</dbReference>
<dbReference type="Gene3D" id="3.20.70.20">
    <property type="match status" value="1"/>
</dbReference>
<dbReference type="HAMAP" id="MF_00806">
    <property type="entry name" value="GrcA"/>
    <property type="match status" value="1"/>
</dbReference>
<dbReference type="InterPro" id="IPR050244">
    <property type="entry name" value="Auton_GlycylRad_Cofactor"/>
</dbReference>
<dbReference type="InterPro" id="IPR019777">
    <property type="entry name" value="Form_AcTrfase_GR_CS"/>
</dbReference>
<dbReference type="InterPro" id="IPR001150">
    <property type="entry name" value="Gly_radical"/>
</dbReference>
<dbReference type="InterPro" id="IPR011140">
    <property type="entry name" value="Glycyl_radical_cofactor_GrcA"/>
</dbReference>
<dbReference type="NCBIfam" id="TIGR04365">
    <property type="entry name" value="spare_glycyl"/>
    <property type="match status" value="1"/>
</dbReference>
<dbReference type="PANTHER" id="PTHR30191">
    <property type="entry name" value="FORMATE ACETYLTRANSFERASE"/>
    <property type="match status" value="1"/>
</dbReference>
<dbReference type="PANTHER" id="PTHR30191:SF0">
    <property type="entry name" value="FORMATE ACETYLTRANSFERASE 1"/>
    <property type="match status" value="1"/>
</dbReference>
<dbReference type="Pfam" id="PF01228">
    <property type="entry name" value="Gly_radical"/>
    <property type="match status" value="1"/>
</dbReference>
<dbReference type="PIRSF" id="PIRSF000378">
    <property type="entry name" value="Gly_radicl_yfiD"/>
    <property type="match status" value="1"/>
</dbReference>
<dbReference type="SUPFAM" id="SSF51998">
    <property type="entry name" value="PFL-like glycyl radical enzymes"/>
    <property type="match status" value="1"/>
</dbReference>
<dbReference type="PROSITE" id="PS00850">
    <property type="entry name" value="GLY_RADICAL_1"/>
    <property type="match status" value="1"/>
</dbReference>
<dbReference type="PROSITE" id="PS51149">
    <property type="entry name" value="GLY_RADICAL_2"/>
    <property type="match status" value="1"/>
</dbReference>
<comment type="function">
    <text evidence="1">Acts as a radical domain for damaged PFL and possibly other radical proteins.</text>
</comment>
<accession>A9MGW0</accession>
<evidence type="ECO:0000255" key="1">
    <source>
        <dbReference type="HAMAP-Rule" id="MF_00806"/>
    </source>
</evidence>
<keyword id="KW-0556">Organic radical</keyword>
<keyword id="KW-1185">Reference proteome</keyword>
<proteinExistence type="inferred from homology"/>